<organism>
    <name type="scientific">Rattus norvegicus</name>
    <name type="common">Rat</name>
    <dbReference type="NCBI Taxonomy" id="10116"/>
    <lineage>
        <taxon>Eukaryota</taxon>
        <taxon>Metazoa</taxon>
        <taxon>Chordata</taxon>
        <taxon>Craniata</taxon>
        <taxon>Vertebrata</taxon>
        <taxon>Euteleostomi</taxon>
        <taxon>Mammalia</taxon>
        <taxon>Eutheria</taxon>
        <taxon>Euarchontoglires</taxon>
        <taxon>Glires</taxon>
        <taxon>Rodentia</taxon>
        <taxon>Myomorpha</taxon>
        <taxon>Muroidea</taxon>
        <taxon>Muridae</taxon>
        <taxon>Murinae</taxon>
        <taxon>Rattus</taxon>
    </lineage>
</organism>
<sequence>MAAAVRQDLAQLMNSSGSHKDLAGKYRQILEKAIQLSGTEQLEALKAFVEAMVNENVSLVISRQLLTDFCTHLPNLPDSTAKEVYHFTLEKVQPRVISFEEQVASIRQRLASIYEKEEDWRNAAQVLVGIPLETGQKQYNVDYKLETYLKIARLYLEDDDPVQAEAYINRASLLQNESTNEQLQIHYKVCYARVLDYRRKFIEAAQRYNELSYKTIVHESERLEALKHALHCTILASAGQQRSRMLATLFKDERCQQLAAYGILEKMYLDRIIRGNQLQEFAAMLMPHQKATTADGSSILDRAVIEHNLLSASKLYNNITFEELGALLEIPAAKAEKIASQMITEGRMNGFIDQIDGIVHFETREALPTWDKQIQSLCFQVNNLLEKISQTAPEWTAQAMEAQMAQ</sequence>
<accession>Q68FS2</accession>
<protein>
    <recommendedName>
        <fullName>COP9 signalosome complex subunit 4</fullName>
        <shortName>SGN4</shortName>
        <shortName>Signalosome subunit 4</shortName>
    </recommendedName>
    <alternativeName>
        <fullName>JAB1-containing signalosome subunit 4</fullName>
    </alternativeName>
</protein>
<evidence type="ECO:0000250" key="1">
    <source>
        <dbReference type="UniProtKB" id="Q9BT78"/>
    </source>
</evidence>
<evidence type="ECO:0000255" key="2">
    <source>
        <dbReference type="PROSITE-ProRule" id="PRU01185"/>
    </source>
</evidence>
<evidence type="ECO:0000269" key="3">
    <source>
    </source>
</evidence>
<evidence type="ECO:0000305" key="4"/>
<dbReference type="EMBL" id="BC079384">
    <property type="protein sequence ID" value="AAH79384.1"/>
    <property type="molecule type" value="mRNA"/>
</dbReference>
<dbReference type="RefSeq" id="NP_001004275.1">
    <property type="nucleotide sequence ID" value="NM_001004275.1"/>
</dbReference>
<dbReference type="SMR" id="Q68FS2"/>
<dbReference type="BioGRID" id="262300">
    <property type="interactions" value="1"/>
</dbReference>
<dbReference type="FunCoup" id="Q68FS2">
    <property type="interactions" value="3843"/>
</dbReference>
<dbReference type="IntAct" id="Q68FS2">
    <property type="interactions" value="18"/>
</dbReference>
<dbReference type="MINT" id="Q68FS2"/>
<dbReference type="STRING" id="10116.ENSRNOP00000003046"/>
<dbReference type="iPTMnet" id="Q68FS2"/>
<dbReference type="PhosphoSitePlus" id="Q68FS2"/>
<dbReference type="jPOST" id="Q68FS2"/>
<dbReference type="PaxDb" id="10116-ENSRNOP00000003046"/>
<dbReference type="GeneID" id="360915"/>
<dbReference type="KEGG" id="rno:360915"/>
<dbReference type="AGR" id="RGD:1302952"/>
<dbReference type="CTD" id="51138"/>
<dbReference type="RGD" id="1302952">
    <property type="gene designation" value="Cops4"/>
</dbReference>
<dbReference type="VEuPathDB" id="HostDB:ENSRNOG00000023650"/>
<dbReference type="eggNOG" id="KOG1497">
    <property type="taxonomic scope" value="Eukaryota"/>
</dbReference>
<dbReference type="HOGENOM" id="CLU_028132_1_0_1"/>
<dbReference type="InParanoid" id="Q68FS2"/>
<dbReference type="OrthoDB" id="295656at2759"/>
<dbReference type="PhylomeDB" id="Q68FS2"/>
<dbReference type="TreeFam" id="TF101147"/>
<dbReference type="Reactome" id="R-RNO-5696394">
    <property type="pathway name" value="DNA Damage Recognition in GG-NER"/>
</dbReference>
<dbReference type="Reactome" id="R-RNO-6781823">
    <property type="pathway name" value="Formation of TC-NER Pre-Incision Complex"/>
</dbReference>
<dbReference type="Reactome" id="R-RNO-8856825">
    <property type="pathway name" value="Cargo recognition for clathrin-mediated endocytosis"/>
</dbReference>
<dbReference type="Reactome" id="R-RNO-8951664">
    <property type="pathway name" value="Neddylation"/>
</dbReference>
<dbReference type="Reactome" id="R-RNO-9013422">
    <property type="pathway name" value="RHOBTB1 GTPase cycle"/>
</dbReference>
<dbReference type="PRO" id="PR:Q68FS2"/>
<dbReference type="Proteomes" id="UP000002494">
    <property type="component" value="Chromosome 14"/>
</dbReference>
<dbReference type="Bgee" id="ENSRNOG00000023650">
    <property type="expression patterns" value="Expressed in skeletal muscle tissue and 20 other cell types or tissues"/>
</dbReference>
<dbReference type="GO" id="GO:0008180">
    <property type="term" value="C:COP9 signalosome"/>
    <property type="evidence" value="ECO:0000266"/>
    <property type="project" value="RGD"/>
</dbReference>
<dbReference type="GO" id="GO:0005737">
    <property type="term" value="C:cytoplasm"/>
    <property type="evidence" value="ECO:0000266"/>
    <property type="project" value="RGD"/>
</dbReference>
<dbReference type="GO" id="GO:0016607">
    <property type="term" value="C:nuclear speck"/>
    <property type="evidence" value="ECO:0007669"/>
    <property type="project" value="Ensembl"/>
</dbReference>
<dbReference type="GO" id="GO:0005634">
    <property type="term" value="C:nucleus"/>
    <property type="evidence" value="ECO:0000266"/>
    <property type="project" value="RGD"/>
</dbReference>
<dbReference type="GO" id="GO:0008021">
    <property type="term" value="C:synaptic vesicle"/>
    <property type="evidence" value="ECO:0000314"/>
    <property type="project" value="UniProtKB"/>
</dbReference>
<dbReference type="GO" id="GO:0000338">
    <property type="term" value="P:protein deneddylation"/>
    <property type="evidence" value="ECO:0000250"/>
    <property type="project" value="UniProtKB"/>
</dbReference>
<dbReference type="FunFam" id="1.10.10.10:FF:000130">
    <property type="entry name" value="COP9 signalosome complex subunit 4"/>
    <property type="match status" value="1"/>
</dbReference>
<dbReference type="Gene3D" id="1.10.10.10">
    <property type="entry name" value="Winged helix-like DNA-binding domain superfamily/Winged helix DNA-binding domain"/>
    <property type="match status" value="1"/>
</dbReference>
<dbReference type="InterPro" id="IPR041406">
    <property type="entry name" value="CSN4_HTH"/>
</dbReference>
<dbReference type="InterPro" id="IPR000717">
    <property type="entry name" value="PCI_dom"/>
</dbReference>
<dbReference type="InterPro" id="IPR054559">
    <property type="entry name" value="PSMD12-CSN4-like_N"/>
</dbReference>
<dbReference type="InterPro" id="IPR040134">
    <property type="entry name" value="PSMD12/CSN4"/>
</dbReference>
<dbReference type="InterPro" id="IPR036388">
    <property type="entry name" value="WH-like_DNA-bd_sf"/>
</dbReference>
<dbReference type="InterPro" id="IPR036390">
    <property type="entry name" value="WH_DNA-bd_sf"/>
</dbReference>
<dbReference type="PANTHER" id="PTHR10855">
    <property type="entry name" value="26S PROTEASOME NON-ATPASE REGULATORY SUBUNIT 12/COP9 SIGNALOSOME COMPLEX SUBUNIT 4"/>
    <property type="match status" value="1"/>
</dbReference>
<dbReference type="PANTHER" id="PTHR10855:SF2">
    <property type="entry name" value="COP9 SIGNALOSOME COMPLEX SUBUNIT 4"/>
    <property type="match status" value="1"/>
</dbReference>
<dbReference type="Pfam" id="PF18420">
    <property type="entry name" value="CSN4_RPN5_eIF3a"/>
    <property type="match status" value="1"/>
</dbReference>
<dbReference type="Pfam" id="PF01399">
    <property type="entry name" value="PCI"/>
    <property type="match status" value="1"/>
</dbReference>
<dbReference type="Pfam" id="PF22241">
    <property type="entry name" value="PSMD12-CSN4_N"/>
    <property type="match status" value="1"/>
</dbReference>
<dbReference type="SMART" id="SM00088">
    <property type="entry name" value="PINT"/>
    <property type="match status" value="1"/>
</dbReference>
<dbReference type="SUPFAM" id="SSF46785">
    <property type="entry name" value="Winged helix' DNA-binding domain"/>
    <property type="match status" value="1"/>
</dbReference>
<dbReference type="PROSITE" id="PS50250">
    <property type="entry name" value="PCI"/>
    <property type="match status" value="1"/>
</dbReference>
<reference key="1">
    <citation type="journal article" date="2004" name="Genome Res.">
        <title>The status, quality, and expansion of the NIH full-length cDNA project: the Mammalian Gene Collection (MGC).</title>
        <authorList>
            <consortium name="The MGC Project Team"/>
        </authorList>
    </citation>
    <scope>NUCLEOTIDE SEQUENCE [LARGE SCALE MRNA]</scope>
    <source>
        <tissue>Testis</tissue>
    </source>
</reference>
<reference key="2">
    <citation type="journal article" date="2011" name="EMBO J.">
        <title>CSN complex controls the stability of selected synaptic proteins via a torsinA-dependent process.</title>
        <authorList>
            <person name="Granata A."/>
            <person name="Koo S.J."/>
            <person name="Haucke V."/>
            <person name="Schiavo G."/>
            <person name="Warner T.T."/>
        </authorList>
    </citation>
    <scope>INTERACTION WITH TOR1A AND STON2</scope>
    <scope>SUBCELLULAR LOCATION</scope>
</reference>
<name>CSN4_RAT</name>
<comment type="function">
    <text evidence="1">Component of the COP9 signalosome complex (CSN), a complex involved in various cellular and developmental processes (By similarity). The CSN complex is an essential regulator of the ubiquitin (Ubl) conjugation pathway by mediating the deneddylation of the cullin subunits of SCF-type E3 ligase complexes, leading to decrease the Ubl ligase activity of SCF-type complexes such as SCF, CSA or DDB2 (By similarity). Also involved in the deneddylation of non-cullin subunits such as STON2 (By similarity). The complex is also involved in phosphorylation of p53/TP53, c-jun/JUN, IkappaBalpha/NFKBIA, ITPK1, IRF8/ICSBP and SNAPIN, possibly via its association with CK2 and PKD kinases (By similarity). CSN-dependent phosphorylation of TP53 and JUN promotes and protects degradation by the Ubl system, respectively (By similarity).</text>
</comment>
<comment type="subunit">
    <text evidence="1 3">Component of the CSN complex, composed of COPS1/GPS1, COPS2, COPS3, COPS4, COPS5, COPS6, COPS7 (COPS7A or COPS7B), COPS8 and COPS9 (By similarity). In the complex, it probably interacts directly with COPS1, COPS2, COPS3, COPS5, COPS6, COPS7 (COPS7A or COPS7B) and COPS8 (By similarity). Interacts with TOR1A; the interaction is direct and associates TOR1A and SNAPIN with the CSN complex (PubMed:21102408). Interacts with STON2; controls STON2 neddylation levels (PubMed:21102408). Interacts with ERCC6 (By similarity).</text>
</comment>
<comment type="subcellular location">
    <subcellularLocation>
        <location evidence="1">Cytoplasm</location>
    </subcellularLocation>
    <subcellularLocation>
        <location evidence="1">Nucleus</location>
    </subcellularLocation>
    <subcellularLocation>
        <location evidence="3">Cytoplasmic vesicle</location>
        <location evidence="3">Secretory vesicle</location>
        <location evidence="3">Synaptic vesicle</location>
    </subcellularLocation>
</comment>
<comment type="similarity">
    <text evidence="4">Belongs to the CSN4 family.</text>
</comment>
<proteinExistence type="evidence at protein level"/>
<keyword id="KW-0007">Acetylation</keyword>
<keyword id="KW-0963">Cytoplasm</keyword>
<keyword id="KW-0968">Cytoplasmic vesicle</keyword>
<keyword id="KW-0539">Nucleus</keyword>
<keyword id="KW-1185">Reference proteome</keyword>
<keyword id="KW-0736">Signalosome</keyword>
<keyword id="KW-0770">Synapse</keyword>
<gene>
    <name type="primary">Cops4</name>
    <name type="synonym">Csn4</name>
</gene>
<feature type="initiator methionine" description="Removed" evidence="1">
    <location>
        <position position="1"/>
    </location>
</feature>
<feature type="chain" id="PRO_0000120989" description="COP9 signalosome complex subunit 4">
    <location>
        <begin position="2"/>
        <end position="406"/>
    </location>
</feature>
<feature type="domain" description="PCI" evidence="2">
    <location>
        <begin position="197"/>
        <end position="366"/>
    </location>
</feature>
<feature type="modified residue" description="N-acetylalanine" evidence="1">
    <location>
        <position position="2"/>
    </location>
</feature>
<feature type="modified residue" description="N6-acetyllysine" evidence="1">
    <location>
        <position position="25"/>
    </location>
</feature>